<protein>
    <recommendedName>
        <fullName>Transcriptional regulator MraZ</fullName>
    </recommendedName>
</protein>
<name>MRAZ_ROSCS</name>
<feature type="chain" id="PRO_1000084016" description="Transcriptional regulator MraZ">
    <location>
        <begin position="1"/>
        <end position="143"/>
    </location>
</feature>
<feature type="domain" description="SpoVT-AbrB 1" evidence="2">
    <location>
        <begin position="5"/>
        <end position="47"/>
    </location>
</feature>
<feature type="domain" description="SpoVT-AbrB 2" evidence="2">
    <location>
        <begin position="76"/>
        <end position="119"/>
    </location>
</feature>
<proteinExistence type="inferred from homology"/>
<gene>
    <name evidence="1" type="primary">mraZ</name>
    <name type="ordered locus">Rcas_1104</name>
</gene>
<comment type="subunit">
    <text evidence="1">Forms oligomers.</text>
</comment>
<comment type="subcellular location">
    <subcellularLocation>
        <location evidence="1">Cytoplasm</location>
        <location evidence="1">Nucleoid</location>
    </subcellularLocation>
</comment>
<comment type="similarity">
    <text evidence="1">Belongs to the MraZ family.</text>
</comment>
<sequence length="143" mass="16295">MFLGEYEHTIDDKGRLAIPARFRDALSEGVVITRGFDRCLMGFPRGVWEELARQVSSLPIGSEETRQLQRMLFSGAADMSLDRQGRILIPQNLREFAELGDQAVIAGLNRHFEIWSPRRWQNVLSAMDANASLFAQKLAELRF</sequence>
<keyword id="KW-0963">Cytoplasm</keyword>
<keyword id="KW-0238">DNA-binding</keyword>
<keyword id="KW-1185">Reference proteome</keyword>
<keyword id="KW-0677">Repeat</keyword>
<keyword id="KW-0804">Transcription</keyword>
<keyword id="KW-0805">Transcription regulation</keyword>
<dbReference type="EMBL" id="CP000804">
    <property type="protein sequence ID" value="ABU57203.1"/>
    <property type="molecule type" value="Genomic_DNA"/>
</dbReference>
<dbReference type="RefSeq" id="WP_012119633.1">
    <property type="nucleotide sequence ID" value="NC_009767.1"/>
</dbReference>
<dbReference type="SMR" id="A7NIA3"/>
<dbReference type="STRING" id="383372.Rcas_1104"/>
<dbReference type="KEGG" id="rca:Rcas_1104"/>
<dbReference type="eggNOG" id="COG2001">
    <property type="taxonomic scope" value="Bacteria"/>
</dbReference>
<dbReference type="HOGENOM" id="CLU_107907_0_3_0"/>
<dbReference type="OrthoDB" id="9807753at2"/>
<dbReference type="Proteomes" id="UP000000263">
    <property type="component" value="Chromosome"/>
</dbReference>
<dbReference type="GO" id="GO:0005737">
    <property type="term" value="C:cytoplasm"/>
    <property type="evidence" value="ECO:0007669"/>
    <property type="project" value="UniProtKB-UniRule"/>
</dbReference>
<dbReference type="GO" id="GO:0009295">
    <property type="term" value="C:nucleoid"/>
    <property type="evidence" value="ECO:0007669"/>
    <property type="project" value="UniProtKB-SubCell"/>
</dbReference>
<dbReference type="GO" id="GO:0003700">
    <property type="term" value="F:DNA-binding transcription factor activity"/>
    <property type="evidence" value="ECO:0007669"/>
    <property type="project" value="UniProtKB-UniRule"/>
</dbReference>
<dbReference type="GO" id="GO:0000976">
    <property type="term" value="F:transcription cis-regulatory region binding"/>
    <property type="evidence" value="ECO:0007669"/>
    <property type="project" value="TreeGrafter"/>
</dbReference>
<dbReference type="GO" id="GO:2000143">
    <property type="term" value="P:negative regulation of DNA-templated transcription initiation"/>
    <property type="evidence" value="ECO:0007669"/>
    <property type="project" value="TreeGrafter"/>
</dbReference>
<dbReference type="CDD" id="cd16321">
    <property type="entry name" value="MraZ_C"/>
    <property type="match status" value="1"/>
</dbReference>
<dbReference type="CDD" id="cd16320">
    <property type="entry name" value="MraZ_N"/>
    <property type="match status" value="1"/>
</dbReference>
<dbReference type="Gene3D" id="3.40.1550.20">
    <property type="entry name" value="Transcriptional regulator MraZ domain"/>
    <property type="match status" value="1"/>
</dbReference>
<dbReference type="HAMAP" id="MF_01008">
    <property type="entry name" value="MraZ"/>
    <property type="match status" value="1"/>
</dbReference>
<dbReference type="InterPro" id="IPR003444">
    <property type="entry name" value="MraZ"/>
</dbReference>
<dbReference type="InterPro" id="IPR035644">
    <property type="entry name" value="MraZ_C"/>
</dbReference>
<dbReference type="InterPro" id="IPR020603">
    <property type="entry name" value="MraZ_dom"/>
</dbReference>
<dbReference type="InterPro" id="IPR035642">
    <property type="entry name" value="MraZ_N"/>
</dbReference>
<dbReference type="InterPro" id="IPR038619">
    <property type="entry name" value="MraZ_sf"/>
</dbReference>
<dbReference type="InterPro" id="IPR007159">
    <property type="entry name" value="SpoVT-AbrB_dom"/>
</dbReference>
<dbReference type="InterPro" id="IPR037914">
    <property type="entry name" value="SpoVT-AbrB_sf"/>
</dbReference>
<dbReference type="NCBIfam" id="TIGR00242">
    <property type="entry name" value="division/cell wall cluster transcriptional repressor MraZ"/>
    <property type="match status" value="1"/>
</dbReference>
<dbReference type="PANTHER" id="PTHR34701">
    <property type="entry name" value="TRANSCRIPTIONAL REGULATOR MRAZ"/>
    <property type="match status" value="1"/>
</dbReference>
<dbReference type="PANTHER" id="PTHR34701:SF1">
    <property type="entry name" value="TRANSCRIPTIONAL REGULATOR MRAZ"/>
    <property type="match status" value="1"/>
</dbReference>
<dbReference type="Pfam" id="PF02381">
    <property type="entry name" value="MraZ"/>
    <property type="match status" value="2"/>
</dbReference>
<dbReference type="SUPFAM" id="SSF89447">
    <property type="entry name" value="AbrB/MazE/MraZ-like"/>
    <property type="match status" value="1"/>
</dbReference>
<dbReference type="PROSITE" id="PS51740">
    <property type="entry name" value="SPOVT_ABRB"/>
    <property type="match status" value="2"/>
</dbReference>
<evidence type="ECO:0000255" key="1">
    <source>
        <dbReference type="HAMAP-Rule" id="MF_01008"/>
    </source>
</evidence>
<evidence type="ECO:0000255" key="2">
    <source>
        <dbReference type="PROSITE-ProRule" id="PRU01076"/>
    </source>
</evidence>
<organism>
    <name type="scientific">Roseiflexus castenholzii (strain DSM 13941 / HLO8)</name>
    <dbReference type="NCBI Taxonomy" id="383372"/>
    <lineage>
        <taxon>Bacteria</taxon>
        <taxon>Bacillati</taxon>
        <taxon>Chloroflexota</taxon>
        <taxon>Chloroflexia</taxon>
        <taxon>Chloroflexales</taxon>
        <taxon>Roseiflexineae</taxon>
        <taxon>Roseiflexaceae</taxon>
        <taxon>Roseiflexus</taxon>
    </lineage>
</organism>
<accession>A7NIA3</accession>
<reference key="1">
    <citation type="submission" date="2007-08" db="EMBL/GenBank/DDBJ databases">
        <title>Complete sequence of Roseiflexus castenholzii DSM 13941.</title>
        <authorList>
            <consortium name="US DOE Joint Genome Institute"/>
            <person name="Copeland A."/>
            <person name="Lucas S."/>
            <person name="Lapidus A."/>
            <person name="Barry K."/>
            <person name="Glavina del Rio T."/>
            <person name="Dalin E."/>
            <person name="Tice H."/>
            <person name="Pitluck S."/>
            <person name="Thompson L.S."/>
            <person name="Brettin T."/>
            <person name="Bruce D."/>
            <person name="Detter J.C."/>
            <person name="Han C."/>
            <person name="Tapia R."/>
            <person name="Schmutz J."/>
            <person name="Larimer F."/>
            <person name="Land M."/>
            <person name="Hauser L."/>
            <person name="Kyrpides N."/>
            <person name="Mikhailova N."/>
            <person name="Bryant D.A."/>
            <person name="Hanada S."/>
            <person name="Tsukatani Y."/>
            <person name="Richardson P."/>
        </authorList>
    </citation>
    <scope>NUCLEOTIDE SEQUENCE [LARGE SCALE GENOMIC DNA]</scope>
    <source>
        <strain>DSM 13941 / HLO8</strain>
    </source>
</reference>